<sequence>MNDQLSRAMRLLSQRDHSESELRRKLAAPPFSAKGNWGKRSGAKSSDVVESNLVESNPVESNLAESNAIEESDPQVIEQVIDYCYQHNWLDDSRFAASYINSRSRKGYGVQRIRSELMQKGVDKERILAAFENSEIDWCQLAKEVAQRKFSETLPVEWKEKAKVQRYLLYRGFFQEEIQSIYTDSVE</sequence>
<keyword id="KW-0963">Cytoplasm</keyword>
<accession>Q1C421</accession>
<feature type="chain" id="PRO_1000065234" description="Regulatory protein RecX">
    <location>
        <begin position="1"/>
        <end position="187"/>
    </location>
</feature>
<feature type="region of interest" description="Disordered" evidence="2">
    <location>
        <begin position="1"/>
        <end position="44"/>
    </location>
</feature>
<feature type="compositionally biased region" description="Basic and acidic residues" evidence="2">
    <location>
        <begin position="13"/>
        <end position="24"/>
    </location>
</feature>
<dbReference type="EMBL" id="CP000308">
    <property type="protein sequence ID" value="ABG14801.1"/>
    <property type="molecule type" value="Genomic_DNA"/>
</dbReference>
<dbReference type="RefSeq" id="WP_002209447.1">
    <property type="nucleotide sequence ID" value="NZ_CP009906.1"/>
</dbReference>
<dbReference type="SMR" id="Q1C421"/>
<dbReference type="GeneID" id="57975403"/>
<dbReference type="KEGG" id="ypa:YPA_2839"/>
<dbReference type="Proteomes" id="UP000001971">
    <property type="component" value="Chromosome"/>
</dbReference>
<dbReference type="GO" id="GO:0005737">
    <property type="term" value="C:cytoplasm"/>
    <property type="evidence" value="ECO:0007669"/>
    <property type="project" value="UniProtKB-SubCell"/>
</dbReference>
<dbReference type="GO" id="GO:0006282">
    <property type="term" value="P:regulation of DNA repair"/>
    <property type="evidence" value="ECO:0007669"/>
    <property type="project" value="UniProtKB-UniRule"/>
</dbReference>
<dbReference type="Gene3D" id="1.10.10.10">
    <property type="entry name" value="Winged helix-like DNA-binding domain superfamily/Winged helix DNA-binding domain"/>
    <property type="match status" value="3"/>
</dbReference>
<dbReference type="HAMAP" id="MF_01114">
    <property type="entry name" value="RecX"/>
    <property type="match status" value="1"/>
</dbReference>
<dbReference type="InterPro" id="IPR053924">
    <property type="entry name" value="RecX_HTH_2nd"/>
</dbReference>
<dbReference type="InterPro" id="IPR053925">
    <property type="entry name" value="RecX_HTH_3rd"/>
</dbReference>
<dbReference type="InterPro" id="IPR003783">
    <property type="entry name" value="Regulatory_RecX"/>
</dbReference>
<dbReference type="InterPro" id="IPR036388">
    <property type="entry name" value="WH-like_DNA-bd_sf"/>
</dbReference>
<dbReference type="NCBIfam" id="NF001053">
    <property type="entry name" value="PRK00117.1-3"/>
    <property type="match status" value="1"/>
</dbReference>
<dbReference type="PANTHER" id="PTHR33602">
    <property type="entry name" value="REGULATORY PROTEIN RECX FAMILY PROTEIN"/>
    <property type="match status" value="1"/>
</dbReference>
<dbReference type="PANTHER" id="PTHR33602:SF1">
    <property type="entry name" value="REGULATORY PROTEIN RECX FAMILY PROTEIN"/>
    <property type="match status" value="1"/>
</dbReference>
<dbReference type="Pfam" id="PF02631">
    <property type="entry name" value="RecX_HTH2"/>
    <property type="match status" value="1"/>
</dbReference>
<dbReference type="Pfam" id="PF21981">
    <property type="entry name" value="RecX_HTH3"/>
    <property type="match status" value="1"/>
</dbReference>
<protein>
    <recommendedName>
        <fullName evidence="1">Regulatory protein RecX</fullName>
    </recommendedName>
</protein>
<comment type="function">
    <text evidence="1">Modulates RecA activity.</text>
</comment>
<comment type="subcellular location">
    <subcellularLocation>
        <location evidence="1">Cytoplasm</location>
    </subcellularLocation>
</comment>
<comment type="similarity">
    <text evidence="1">Belongs to the RecX family.</text>
</comment>
<name>RECX_YERPA</name>
<gene>
    <name evidence="1" type="primary">recX</name>
    <name type="ordered locus">YPA_2839</name>
</gene>
<proteinExistence type="inferred from homology"/>
<reference key="1">
    <citation type="journal article" date="2006" name="J. Bacteriol.">
        <title>Complete genome sequence of Yersinia pestis strains Antiqua and Nepal516: evidence of gene reduction in an emerging pathogen.</title>
        <authorList>
            <person name="Chain P.S.G."/>
            <person name="Hu P."/>
            <person name="Malfatti S.A."/>
            <person name="Radnedge L."/>
            <person name="Larimer F."/>
            <person name="Vergez L.M."/>
            <person name="Worsham P."/>
            <person name="Chu M.C."/>
            <person name="Andersen G.L."/>
        </authorList>
    </citation>
    <scope>NUCLEOTIDE SEQUENCE [LARGE SCALE GENOMIC DNA]</scope>
    <source>
        <strain>Antiqua</strain>
    </source>
</reference>
<evidence type="ECO:0000255" key="1">
    <source>
        <dbReference type="HAMAP-Rule" id="MF_01114"/>
    </source>
</evidence>
<evidence type="ECO:0000256" key="2">
    <source>
        <dbReference type="SAM" id="MobiDB-lite"/>
    </source>
</evidence>
<organism>
    <name type="scientific">Yersinia pestis bv. Antiqua (strain Antiqua)</name>
    <dbReference type="NCBI Taxonomy" id="360102"/>
    <lineage>
        <taxon>Bacteria</taxon>
        <taxon>Pseudomonadati</taxon>
        <taxon>Pseudomonadota</taxon>
        <taxon>Gammaproteobacteria</taxon>
        <taxon>Enterobacterales</taxon>
        <taxon>Yersiniaceae</taxon>
        <taxon>Yersinia</taxon>
    </lineage>
</organism>